<sequence>MLKPLGDRVVLKVEEKEQTVGGFVLAGSAQEKTKTAQVVATGQGVRTLNGDLVAPSVKTGDRVLVEAHAGLDVKDGDEKYIIVGEANILAIIEE</sequence>
<comment type="function">
    <text evidence="1">Together with the chaperonin GroEL, plays an essential role in assisting protein folding. The GroEL-GroES system forms a nano-cage that allows encapsulation of the non-native substrate proteins and provides a physical environment optimized to promote and accelerate protein folding. GroES binds to the apical surface of the GroEL ring, thereby capping the opening of the GroEL channel.</text>
</comment>
<comment type="subunit">
    <text evidence="1">Heptamer of 7 subunits arranged in a ring. Interacts with the chaperonin GroEL.</text>
</comment>
<comment type="subcellular location">
    <subcellularLocation>
        <location evidence="1">Cytoplasm</location>
    </subcellularLocation>
</comment>
<comment type="similarity">
    <text evidence="1">Belongs to the GroES chaperonin family.</text>
</comment>
<feature type="chain" id="PRO_1000146923" description="Co-chaperonin GroES">
    <location>
        <begin position="1"/>
        <end position="94"/>
    </location>
</feature>
<dbReference type="EMBL" id="CP000921">
    <property type="protein sequence ID" value="ACO24210.1"/>
    <property type="molecule type" value="Genomic_DNA"/>
</dbReference>
<dbReference type="RefSeq" id="WP_000917339.1">
    <property type="nucleotide sequence ID" value="NC_012469.1"/>
</dbReference>
<dbReference type="SMR" id="C1CTD7"/>
<dbReference type="KEGG" id="snt:SPT_1856"/>
<dbReference type="HOGENOM" id="CLU_132825_1_2_9"/>
<dbReference type="GO" id="GO:0005737">
    <property type="term" value="C:cytoplasm"/>
    <property type="evidence" value="ECO:0007669"/>
    <property type="project" value="UniProtKB-SubCell"/>
</dbReference>
<dbReference type="GO" id="GO:0005524">
    <property type="term" value="F:ATP binding"/>
    <property type="evidence" value="ECO:0007669"/>
    <property type="project" value="InterPro"/>
</dbReference>
<dbReference type="GO" id="GO:0046872">
    <property type="term" value="F:metal ion binding"/>
    <property type="evidence" value="ECO:0007669"/>
    <property type="project" value="TreeGrafter"/>
</dbReference>
<dbReference type="GO" id="GO:0044183">
    <property type="term" value="F:protein folding chaperone"/>
    <property type="evidence" value="ECO:0007669"/>
    <property type="project" value="InterPro"/>
</dbReference>
<dbReference type="GO" id="GO:0051087">
    <property type="term" value="F:protein-folding chaperone binding"/>
    <property type="evidence" value="ECO:0007669"/>
    <property type="project" value="TreeGrafter"/>
</dbReference>
<dbReference type="GO" id="GO:0051082">
    <property type="term" value="F:unfolded protein binding"/>
    <property type="evidence" value="ECO:0007669"/>
    <property type="project" value="TreeGrafter"/>
</dbReference>
<dbReference type="GO" id="GO:0051085">
    <property type="term" value="P:chaperone cofactor-dependent protein refolding"/>
    <property type="evidence" value="ECO:0007669"/>
    <property type="project" value="TreeGrafter"/>
</dbReference>
<dbReference type="CDD" id="cd00320">
    <property type="entry name" value="cpn10"/>
    <property type="match status" value="1"/>
</dbReference>
<dbReference type="FunFam" id="2.30.33.40:FF:000007">
    <property type="entry name" value="10 kDa chaperonin"/>
    <property type="match status" value="1"/>
</dbReference>
<dbReference type="Gene3D" id="2.30.33.40">
    <property type="entry name" value="GroES chaperonin"/>
    <property type="match status" value="1"/>
</dbReference>
<dbReference type="HAMAP" id="MF_00580">
    <property type="entry name" value="CH10"/>
    <property type="match status" value="1"/>
</dbReference>
<dbReference type="InterPro" id="IPR020818">
    <property type="entry name" value="Chaperonin_GroES"/>
</dbReference>
<dbReference type="InterPro" id="IPR037124">
    <property type="entry name" value="Chaperonin_GroES_sf"/>
</dbReference>
<dbReference type="InterPro" id="IPR018369">
    <property type="entry name" value="Chaprnonin_Cpn10_CS"/>
</dbReference>
<dbReference type="InterPro" id="IPR011032">
    <property type="entry name" value="GroES-like_sf"/>
</dbReference>
<dbReference type="NCBIfam" id="NF001528">
    <property type="entry name" value="PRK00364.1-4"/>
    <property type="match status" value="1"/>
</dbReference>
<dbReference type="PANTHER" id="PTHR10772">
    <property type="entry name" value="10 KDA HEAT SHOCK PROTEIN"/>
    <property type="match status" value="1"/>
</dbReference>
<dbReference type="PANTHER" id="PTHR10772:SF58">
    <property type="entry name" value="CO-CHAPERONIN GROES"/>
    <property type="match status" value="1"/>
</dbReference>
<dbReference type="Pfam" id="PF00166">
    <property type="entry name" value="Cpn10"/>
    <property type="match status" value="1"/>
</dbReference>
<dbReference type="PRINTS" id="PR00297">
    <property type="entry name" value="CHAPERONIN10"/>
</dbReference>
<dbReference type="SMART" id="SM00883">
    <property type="entry name" value="Cpn10"/>
    <property type="match status" value="1"/>
</dbReference>
<dbReference type="SUPFAM" id="SSF50129">
    <property type="entry name" value="GroES-like"/>
    <property type="match status" value="1"/>
</dbReference>
<dbReference type="PROSITE" id="PS00681">
    <property type="entry name" value="CHAPERONINS_CPN10"/>
    <property type="match status" value="1"/>
</dbReference>
<keyword id="KW-0143">Chaperone</keyword>
<keyword id="KW-0963">Cytoplasm</keyword>
<name>CH10_STRZT</name>
<evidence type="ECO:0000255" key="1">
    <source>
        <dbReference type="HAMAP-Rule" id="MF_00580"/>
    </source>
</evidence>
<proteinExistence type="inferred from homology"/>
<reference key="1">
    <citation type="journal article" date="2010" name="Genome Biol.">
        <title>Structure and dynamics of the pan-genome of Streptococcus pneumoniae and closely related species.</title>
        <authorList>
            <person name="Donati C."/>
            <person name="Hiller N.L."/>
            <person name="Tettelin H."/>
            <person name="Muzzi A."/>
            <person name="Croucher N.J."/>
            <person name="Angiuoli S.V."/>
            <person name="Oggioni M."/>
            <person name="Dunning Hotopp J.C."/>
            <person name="Hu F.Z."/>
            <person name="Riley D.R."/>
            <person name="Covacci A."/>
            <person name="Mitchell T.J."/>
            <person name="Bentley S.D."/>
            <person name="Kilian M."/>
            <person name="Ehrlich G.D."/>
            <person name="Rappuoli R."/>
            <person name="Moxon E.R."/>
            <person name="Masignani V."/>
        </authorList>
    </citation>
    <scope>NUCLEOTIDE SEQUENCE [LARGE SCALE GENOMIC DNA]</scope>
    <source>
        <strain>Taiwan19F-14</strain>
    </source>
</reference>
<organism>
    <name type="scientific">Streptococcus pneumoniae (strain Taiwan19F-14)</name>
    <dbReference type="NCBI Taxonomy" id="487213"/>
    <lineage>
        <taxon>Bacteria</taxon>
        <taxon>Bacillati</taxon>
        <taxon>Bacillota</taxon>
        <taxon>Bacilli</taxon>
        <taxon>Lactobacillales</taxon>
        <taxon>Streptococcaceae</taxon>
        <taxon>Streptococcus</taxon>
    </lineage>
</organism>
<protein>
    <recommendedName>
        <fullName evidence="1">Co-chaperonin GroES</fullName>
    </recommendedName>
    <alternativeName>
        <fullName evidence="1">10 kDa chaperonin</fullName>
    </alternativeName>
    <alternativeName>
        <fullName evidence="1">Chaperonin-10</fullName>
        <shortName evidence="1">Cpn10</shortName>
    </alternativeName>
</protein>
<accession>C1CTD7</accession>
<gene>
    <name evidence="1" type="primary">groES</name>
    <name evidence="1" type="synonym">groS</name>
    <name type="ordered locus">SPT_1856</name>
</gene>